<keyword id="KW-0903">Direct protein sequencing</keyword>
<keyword id="KW-1015">Disulfide bond</keyword>
<keyword id="KW-0964">Secreted</keyword>
<evidence type="ECO:0000269" key="1">
    <source>
    </source>
</evidence>
<evidence type="ECO:0000303" key="2">
    <source>
    </source>
</evidence>
<evidence type="ECO:0000305" key="3"/>
<evidence type="ECO:0000305" key="4">
    <source>
    </source>
</evidence>
<reference key="1">
    <citation type="journal article" date="2016" name="Toxicon">
        <title>Isolation, chemical and functional characterization of several new K(+)-channel blocking peptides from the venom of the scorpion Centruroides tecomanus.</title>
        <authorList>
            <person name="Olamendi-Portugal T."/>
            <person name="Bartok A."/>
            <person name="Zamudio-Zuniga F."/>
            <person name="Balajthy A."/>
            <person name="Becerril B."/>
            <person name="Panyi G."/>
            <person name="Possani L.D."/>
        </authorList>
    </citation>
    <scope>PROTEIN SEQUENCE</scope>
    <scope>SUBCELLULAR LOCATION</scope>
    <scope>MASS SPECTROMETRY</scope>
    <source>
        <tissue>Venom</tissue>
    </source>
</reference>
<name>PEP_CENTE</name>
<comment type="subcellular location">
    <subcellularLocation>
        <location evidence="1">Secreted</location>
    </subcellularLocation>
</comment>
<comment type="tissue specificity">
    <text evidence="4">Expressed by the venom gland.</text>
</comment>
<comment type="domain">
    <text evidence="3">Has the structural arrangement of an alpha-helix connected to antiparallel beta-sheets by disulfide bonds (CS-alpha/beta).</text>
</comment>
<comment type="mass spectrometry"/>
<comment type="miscellaneous">
    <text evidence="1">Negative results: has no effect on voltage-gated potassium channels Kv1.1/KCNA1, Kv1.2/KCNA2, Kv1.3/KCNA3 and Shaker IR (with inactivation domain removed) and on intermediate conductance calcium-activated potassium channel KCa3.1/KCNN4. Does not show antimicrobial activity as well.</text>
</comment>
<comment type="similarity">
    <text evidence="3">Belongs to the short scorpion toxin superfamily. Potassium channel inhibitor family. Alpha-KTx 10 subfamily.</text>
</comment>
<organism>
    <name type="scientific">Centruroides tecomanus</name>
    <name type="common">Scorpion</name>
    <name type="synonym">Centruroides limpidus tecomanus</name>
    <dbReference type="NCBI Taxonomy" id="1028682"/>
    <lineage>
        <taxon>Eukaryota</taxon>
        <taxon>Metazoa</taxon>
        <taxon>Ecdysozoa</taxon>
        <taxon>Arthropoda</taxon>
        <taxon>Chelicerata</taxon>
        <taxon>Arachnida</taxon>
        <taxon>Scorpiones</taxon>
        <taxon>Buthida</taxon>
        <taxon>Buthoidea</taxon>
        <taxon>Buthidae</taxon>
        <taxon>Centruroides</taxon>
    </lineage>
</organism>
<accession>C0HJW4</accession>
<proteinExistence type="evidence at protein level"/>
<dbReference type="SMR" id="C0HJW4"/>
<dbReference type="GO" id="GO:0005576">
    <property type="term" value="C:extracellular region"/>
    <property type="evidence" value="ECO:0007669"/>
    <property type="project" value="UniProtKB-SubCell"/>
</dbReference>
<dbReference type="InterPro" id="IPR036574">
    <property type="entry name" value="Scorpion_toxin-like_sf"/>
</dbReference>
<dbReference type="SUPFAM" id="SSF57095">
    <property type="entry name" value="Scorpion toxin-like"/>
    <property type="match status" value="1"/>
</dbReference>
<sequence>IRRYCDPRVCDRECLEKGKYFGRCIRDICKCN</sequence>
<feature type="peptide" id="PRO_0000436540" description="Peptide II.10.10" evidence="1">
    <location>
        <begin position="1"/>
        <end position="32"/>
    </location>
</feature>
<feature type="disulfide bond" evidence="3">
    <location>
        <begin position="5"/>
        <end position="24"/>
    </location>
</feature>
<feature type="disulfide bond" evidence="3">
    <location>
        <begin position="10"/>
        <end position="29"/>
    </location>
</feature>
<feature type="disulfide bond" evidence="3">
    <location>
        <begin position="14"/>
        <end position="31"/>
    </location>
</feature>
<protein>
    <recommendedName>
        <fullName evidence="2">Peptide II.10.10</fullName>
    </recommendedName>
</protein>